<keyword id="KW-0963">Cytoplasm</keyword>
<keyword id="KW-0227">DNA damage</keyword>
<keyword id="KW-0234">DNA repair</keyword>
<keyword id="KW-0378">Hydrolase</keyword>
<sequence>MQLTEQQQDKLSKVQLEESWKRSLTPFLLSPYMDSLRDFLFQQKQAQKTIYPPSKQIFNALNITPLDHVKVVILGQDPYHGPNQANGLSFSVQRGVALPPSLRNIFHELHTDLGVPISRHGDLTKWAEQGVLLLNSVLTVEAGQPTSHQKQGWEEFTDAVIDVLNEQREHIVFILWGAYAQRKGQRINREKHLVLTAAHPSPLAANRGGFFGCKVFSKTNQYLKQHGIEPIDWQLDA</sequence>
<reference key="1">
    <citation type="journal article" date="2008" name="J. Bacteriol.">
        <title>Comparative genome sequence analysis of multidrug-resistant Acinetobacter baumannii.</title>
        <authorList>
            <person name="Adams M.D."/>
            <person name="Goglin K."/>
            <person name="Molyneaux N."/>
            <person name="Hujer K.M."/>
            <person name="Lavender H."/>
            <person name="Jamison J.J."/>
            <person name="MacDonald I.J."/>
            <person name="Martin K.M."/>
            <person name="Russo T."/>
            <person name="Campagnari A.A."/>
            <person name="Hujer A.M."/>
            <person name="Bonomo R.A."/>
            <person name="Gill S.R."/>
        </authorList>
    </citation>
    <scope>NUCLEOTIDE SEQUENCE [LARGE SCALE GENOMIC DNA]</scope>
    <source>
        <strain>AB307-0294</strain>
    </source>
</reference>
<name>UNG_ACIB3</name>
<organism>
    <name type="scientific">Acinetobacter baumannii (strain AB307-0294)</name>
    <dbReference type="NCBI Taxonomy" id="557600"/>
    <lineage>
        <taxon>Bacteria</taxon>
        <taxon>Pseudomonadati</taxon>
        <taxon>Pseudomonadota</taxon>
        <taxon>Gammaproteobacteria</taxon>
        <taxon>Moraxellales</taxon>
        <taxon>Moraxellaceae</taxon>
        <taxon>Acinetobacter</taxon>
        <taxon>Acinetobacter calcoaceticus/baumannii complex</taxon>
    </lineage>
</organism>
<dbReference type="EC" id="3.2.2.27" evidence="1"/>
<dbReference type="EMBL" id="CP001172">
    <property type="protein sequence ID" value="ACJ57344.1"/>
    <property type="molecule type" value="Genomic_DNA"/>
</dbReference>
<dbReference type="RefSeq" id="WP_001177527.1">
    <property type="nucleotide sequence ID" value="NZ_CP001172.1"/>
</dbReference>
<dbReference type="SMR" id="B7H3L4"/>
<dbReference type="HOGENOM" id="CLU_032162_3_0_6"/>
<dbReference type="Proteomes" id="UP000006924">
    <property type="component" value="Chromosome"/>
</dbReference>
<dbReference type="GO" id="GO:0005737">
    <property type="term" value="C:cytoplasm"/>
    <property type="evidence" value="ECO:0007669"/>
    <property type="project" value="UniProtKB-SubCell"/>
</dbReference>
<dbReference type="GO" id="GO:0004844">
    <property type="term" value="F:uracil DNA N-glycosylase activity"/>
    <property type="evidence" value="ECO:0007669"/>
    <property type="project" value="UniProtKB-UniRule"/>
</dbReference>
<dbReference type="GO" id="GO:0097510">
    <property type="term" value="P:base-excision repair, AP site formation via deaminated base removal"/>
    <property type="evidence" value="ECO:0007669"/>
    <property type="project" value="TreeGrafter"/>
</dbReference>
<dbReference type="CDD" id="cd10027">
    <property type="entry name" value="UDG-F1-like"/>
    <property type="match status" value="1"/>
</dbReference>
<dbReference type="FunFam" id="3.40.470.10:FF:000001">
    <property type="entry name" value="Uracil-DNA glycosylase"/>
    <property type="match status" value="1"/>
</dbReference>
<dbReference type="Gene3D" id="3.40.470.10">
    <property type="entry name" value="Uracil-DNA glycosylase-like domain"/>
    <property type="match status" value="1"/>
</dbReference>
<dbReference type="HAMAP" id="MF_00148">
    <property type="entry name" value="UDG"/>
    <property type="match status" value="1"/>
</dbReference>
<dbReference type="InterPro" id="IPR002043">
    <property type="entry name" value="UDG_fam1"/>
</dbReference>
<dbReference type="InterPro" id="IPR018085">
    <property type="entry name" value="Ura-DNA_Glyclase_AS"/>
</dbReference>
<dbReference type="InterPro" id="IPR005122">
    <property type="entry name" value="Uracil-DNA_glycosylase-like"/>
</dbReference>
<dbReference type="InterPro" id="IPR036895">
    <property type="entry name" value="Uracil-DNA_glycosylase-like_sf"/>
</dbReference>
<dbReference type="NCBIfam" id="NF003588">
    <property type="entry name" value="PRK05254.1-1"/>
    <property type="match status" value="1"/>
</dbReference>
<dbReference type="NCBIfam" id="NF003589">
    <property type="entry name" value="PRK05254.1-2"/>
    <property type="match status" value="1"/>
</dbReference>
<dbReference type="NCBIfam" id="NF003591">
    <property type="entry name" value="PRK05254.1-4"/>
    <property type="match status" value="1"/>
</dbReference>
<dbReference type="NCBIfam" id="NF003592">
    <property type="entry name" value="PRK05254.1-5"/>
    <property type="match status" value="1"/>
</dbReference>
<dbReference type="NCBIfam" id="TIGR00628">
    <property type="entry name" value="ung"/>
    <property type="match status" value="1"/>
</dbReference>
<dbReference type="PANTHER" id="PTHR11264">
    <property type="entry name" value="URACIL-DNA GLYCOSYLASE"/>
    <property type="match status" value="1"/>
</dbReference>
<dbReference type="PANTHER" id="PTHR11264:SF0">
    <property type="entry name" value="URACIL-DNA GLYCOSYLASE"/>
    <property type="match status" value="1"/>
</dbReference>
<dbReference type="Pfam" id="PF03167">
    <property type="entry name" value="UDG"/>
    <property type="match status" value="1"/>
</dbReference>
<dbReference type="SMART" id="SM00986">
    <property type="entry name" value="UDG"/>
    <property type="match status" value="1"/>
</dbReference>
<dbReference type="SMART" id="SM00987">
    <property type="entry name" value="UreE_C"/>
    <property type="match status" value="1"/>
</dbReference>
<dbReference type="SUPFAM" id="SSF52141">
    <property type="entry name" value="Uracil-DNA glycosylase-like"/>
    <property type="match status" value="1"/>
</dbReference>
<dbReference type="PROSITE" id="PS00130">
    <property type="entry name" value="U_DNA_GLYCOSYLASE"/>
    <property type="match status" value="1"/>
</dbReference>
<gene>
    <name evidence="1" type="primary">ung</name>
    <name type="ordered locus">ABBFA_001909</name>
</gene>
<protein>
    <recommendedName>
        <fullName evidence="1">Uracil-DNA glycosylase</fullName>
        <shortName evidence="1">UDG</shortName>
        <ecNumber evidence="1">3.2.2.27</ecNumber>
    </recommendedName>
</protein>
<feature type="chain" id="PRO_1000199759" description="Uracil-DNA glycosylase">
    <location>
        <begin position="1"/>
        <end position="237"/>
    </location>
</feature>
<feature type="active site" description="Proton acceptor" evidence="1">
    <location>
        <position position="77"/>
    </location>
</feature>
<comment type="function">
    <text evidence="1">Excises uracil residues from the DNA which can arise as a result of misincorporation of dUMP residues by DNA polymerase or due to deamination of cytosine.</text>
</comment>
<comment type="catalytic activity">
    <reaction evidence="1">
        <text>Hydrolyzes single-stranded DNA or mismatched double-stranded DNA and polynucleotides, releasing free uracil.</text>
        <dbReference type="EC" id="3.2.2.27"/>
    </reaction>
</comment>
<comment type="subcellular location">
    <subcellularLocation>
        <location evidence="1">Cytoplasm</location>
    </subcellularLocation>
</comment>
<comment type="similarity">
    <text evidence="1">Belongs to the uracil-DNA glycosylase (UDG) superfamily. UNG family.</text>
</comment>
<evidence type="ECO:0000255" key="1">
    <source>
        <dbReference type="HAMAP-Rule" id="MF_00148"/>
    </source>
</evidence>
<proteinExistence type="inferred from homology"/>
<accession>B7H3L4</accession>